<dbReference type="EC" id="3.1.4.1" evidence="2"/>
<dbReference type="EMBL" id="AP002071">
    <property type="protein sequence ID" value="BAD72189.1"/>
    <property type="molecule type" value="Genomic_DNA"/>
</dbReference>
<dbReference type="EMBL" id="AP008212">
    <property type="protein sequence ID" value="BAF18851.1"/>
    <property type="molecule type" value="Genomic_DNA"/>
</dbReference>
<dbReference type="EMBL" id="AP014962">
    <property type="protein sequence ID" value="BAS96385.1"/>
    <property type="molecule type" value="Genomic_DNA"/>
</dbReference>
<dbReference type="EMBL" id="CM000143">
    <property type="protein sequence ID" value="EEE65177.1"/>
    <property type="status" value="ALT_SEQ"/>
    <property type="molecule type" value="Genomic_DNA"/>
</dbReference>
<dbReference type="RefSeq" id="XP_015643669.1">
    <property type="nucleotide sequence ID" value="XM_015788183.1"/>
</dbReference>
<dbReference type="SMR" id="Q5SNL7"/>
<dbReference type="FunCoup" id="Q5SNL7">
    <property type="interactions" value="1405"/>
</dbReference>
<dbReference type="STRING" id="39947.Q5SNL7"/>
<dbReference type="PaxDb" id="39947-Q5SNL7"/>
<dbReference type="EnsemblPlants" id="Os06t0171800-01">
    <molecule id="Q5SNL7-1"/>
    <property type="protein sequence ID" value="Os06t0171800-01"/>
    <property type="gene ID" value="Os06g0171800"/>
</dbReference>
<dbReference type="Gramene" id="Os06t0171800-01">
    <molecule id="Q5SNL7-1"/>
    <property type="protein sequence ID" value="Os06t0171800-01"/>
    <property type="gene ID" value="Os06g0171800"/>
</dbReference>
<dbReference type="KEGG" id="dosa:Os06g0171800"/>
<dbReference type="eggNOG" id="KOG2143">
    <property type="taxonomic scope" value="Eukaryota"/>
</dbReference>
<dbReference type="HOGENOM" id="CLU_005116_2_0_1"/>
<dbReference type="InParanoid" id="Q5SNL7"/>
<dbReference type="OMA" id="ITDVMAN"/>
<dbReference type="OrthoDB" id="76364at2759"/>
<dbReference type="Proteomes" id="UP000000763">
    <property type="component" value="Chromosome 6"/>
</dbReference>
<dbReference type="Proteomes" id="UP000007752">
    <property type="component" value="Chromosome 6"/>
</dbReference>
<dbReference type="Proteomes" id="UP000059680">
    <property type="component" value="Chromosome 6"/>
</dbReference>
<dbReference type="GO" id="GO:0005634">
    <property type="term" value="C:nucleus"/>
    <property type="evidence" value="ECO:0000318"/>
    <property type="project" value="GO_Central"/>
</dbReference>
<dbReference type="GO" id="GO:0008409">
    <property type="term" value="F:5'-3' exonuclease activity"/>
    <property type="evidence" value="ECO:0000318"/>
    <property type="project" value="GO_Central"/>
</dbReference>
<dbReference type="GO" id="GO:0017108">
    <property type="term" value="F:5'-flap endonuclease activity"/>
    <property type="evidence" value="ECO:0000318"/>
    <property type="project" value="GO_Central"/>
</dbReference>
<dbReference type="GO" id="GO:0070336">
    <property type="term" value="F:flap-structured DNA binding"/>
    <property type="evidence" value="ECO:0000318"/>
    <property type="project" value="GO_Central"/>
</dbReference>
<dbReference type="GO" id="GO:0016818">
    <property type="term" value="F:hydrolase activity, acting on acid anhydrides, in phosphorus-containing anhydrides"/>
    <property type="evidence" value="ECO:0007669"/>
    <property type="project" value="InterPro"/>
</dbReference>
<dbReference type="GO" id="GO:0004528">
    <property type="term" value="F:phosphodiesterase I activity"/>
    <property type="evidence" value="ECO:0007669"/>
    <property type="project" value="UniProtKB-EC"/>
</dbReference>
<dbReference type="GO" id="GO:0008270">
    <property type="term" value="F:zinc ion binding"/>
    <property type="evidence" value="ECO:0007669"/>
    <property type="project" value="UniProtKB-KW"/>
</dbReference>
<dbReference type="GO" id="GO:0007129">
    <property type="term" value="P:homologous chromosome pairing at meiosis"/>
    <property type="evidence" value="ECO:0007669"/>
    <property type="project" value="EnsemblPlants"/>
</dbReference>
<dbReference type="GO" id="GO:0036297">
    <property type="term" value="P:interstrand cross-link repair"/>
    <property type="evidence" value="ECO:0000318"/>
    <property type="project" value="GO_Central"/>
</dbReference>
<dbReference type="CDD" id="cd22326">
    <property type="entry name" value="FAN1-like"/>
    <property type="match status" value="1"/>
</dbReference>
<dbReference type="FunFam" id="3.30.70.2330:FF:000002">
    <property type="entry name" value="Fanconi-associated nuclease"/>
    <property type="match status" value="1"/>
</dbReference>
<dbReference type="Gene3D" id="3.30.70.2330">
    <property type="match status" value="1"/>
</dbReference>
<dbReference type="Gene3D" id="3.40.1350.10">
    <property type="match status" value="1"/>
</dbReference>
<dbReference type="Gene3D" id="3.30.160.60">
    <property type="entry name" value="Classic Zinc Finger"/>
    <property type="match status" value="1"/>
</dbReference>
<dbReference type="InterPro" id="IPR033315">
    <property type="entry name" value="Fan1-like"/>
</dbReference>
<dbReference type="InterPro" id="IPR049132">
    <property type="entry name" value="FAN1-like_euk"/>
</dbReference>
<dbReference type="InterPro" id="IPR049126">
    <property type="entry name" value="FAN1-like_TPR"/>
</dbReference>
<dbReference type="InterPro" id="IPR049125">
    <property type="entry name" value="FAN1-like_WH"/>
</dbReference>
<dbReference type="InterPro" id="IPR014905">
    <property type="entry name" value="HIRAN"/>
</dbReference>
<dbReference type="InterPro" id="IPR006642">
    <property type="entry name" value="Rad18_UBZ4"/>
</dbReference>
<dbReference type="InterPro" id="IPR011856">
    <property type="entry name" value="tRNA_endonuc-like_dom_sf"/>
</dbReference>
<dbReference type="InterPro" id="IPR014883">
    <property type="entry name" value="VRR_NUC"/>
</dbReference>
<dbReference type="PANTHER" id="PTHR15749">
    <property type="entry name" value="FANCONI-ASSOCIATED NUCLEASE 1"/>
    <property type="match status" value="1"/>
</dbReference>
<dbReference type="PANTHER" id="PTHR15749:SF4">
    <property type="entry name" value="FANCONI-ASSOCIATED NUCLEASE 1"/>
    <property type="match status" value="1"/>
</dbReference>
<dbReference type="Pfam" id="PF21315">
    <property type="entry name" value="FAN1_HTH"/>
    <property type="match status" value="1"/>
</dbReference>
<dbReference type="Pfam" id="PF21170">
    <property type="entry name" value="FAN1_TPR"/>
    <property type="match status" value="1"/>
</dbReference>
<dbReference type="Pfam" id="PF08797">
    <property type="entry name" value="HIRAN"/>
    <property type="match status" value="1"/>
</dbReference>
<dbReference type="Pfam" id="PF08774">
    <property type="entry name" value="VRR_NUC"/>
    <property type="match status" value="1"/>
</dbReference>
<dbReference type="SMART" id="SM00910">
    <property type="entry name" value="HIRAN"/>
    <property type="match status" value="1"/>
</dbReference>
<dbReference type="SMART" id="SM00990">
    <property type="entry name" value="VRR_NUC"/>
    <property type="match status" value="1"/>
</dbReference>
<dbReference type="SMART" id="SM00734">
    <property type="entry name" value="ZnF_Rad18"/>
    <property type="match status" value="1"/>
</dbReference>
<dbReference type="PROSITE" id="PS51908">
    <property type="entry name" value="ZF_UBZ4"/>
    <property type="match status" value="1"/>
</dbReference>
<comment type="function">
    <text evidence="2">Nuclease required for the repair of DNA interstrand cross-links (ICL). Acts as a 5'-3' exonuclease that anchors at a cut end of DNA and cleaves DNA successively at every third nucleotide, allowing to excise an ICL from one strand through flanking incisions.</text>
</comment>
<comment type="catalytic activity">
    <reaction evidence="2">
        <text>Hydrolytically removes 5'-nucleotides successively from the 3'-hydroxy termini of 3'-hydroxy-terminated oligonucleotides.</text>
        <dbReference type="EC" id="3.1.4.1"/>
    </reaction>
</comment>
<comment type="cofactor">
    <cofactor evidence="1">
        <name>Mn(2+)</name>
        <dbReference type="ChEBI" id="CHEBI:29035"/>
    </cofactor>
    <cofactor evidence="1">
        <name>Mg(2+)</name>
        <dbReference type="ChEBI" id="CHEBI:18420"/>
    </cofactor>
    <text evidence="1">Binds 2 magnesium or manganese ions per subunit.</text>
</comment>
<comment type="alternative products">
    <event type="alternative splicing"/>
    <isoform>
        <id>Q5SNL7-1</id>
        <name>1</name>
        <sequence type="displayed"/>
    </isoform>
    <isoform>
        <id>Q5SNL7-2</id>
        <name>2</name>
        <sequence type="described" ref="VSP_039787 VSP_039788"/>
    </isoform>
</comment>
<comment type="similarity">
    <text evidence="5">Belongs to the FAN1 family.</text>
</comment>
<comment type="sequence caution" evidence="5">
    <conflict type="erroneous gene model prediction">
        <sequence resource="EMBL-CDS" id="EEE65177"/>
    </conflict>
</comment>
<keyword id="KW-0025">Alternative splicing</keyword>
<keyword id="KW-0227">DNA damage</keyword>
<keyword id="KW-0234">DNA repair</keyword>
<keyword id="KW-0378">Hydrolase</keyword>
<keyword id="KW-0460">Magnesium</keyword>
<keyword id="KW-0464">Manganese</keyword>
<keyword id="KW-0479">Metal-binding</keyword>
<keyword id="KW-0540">Nuclease</keyword>
<keyword id="KW-1185">Reference proteome</keyword>
<keyword id="KW-0862">Zinc</keyword>
<keyword id="KW-0863">Zinc-finger</keyword>
<sequence length="964" mass="107918">MLTGRESLVRLIGRRRRSPLPAALALAVPPSRSLQDDAADAEREAAAGGSSSGGGDAAGAAGWVACPVCGESIRGTDYCVNTHLDICLTRGTKRKLTQSTLLDFSFSRKATDDYALNNLNTSDEAEHMEPTDGNVSSDGAFFSLNNDKVNSKGSANASSPGCLHGSPDISETCDTCLPPNVLLPYTENTANNGVVKKCLSHMPSTDATSSTIGLLSVTDSSNSVVVDTVIVGRRFHENIELQEGASITLLRDPQNAKDPDAIKVLYAGYECEQMLGYLPRELAKVLAPLLDRHYIECEGCVVGVPEQQLDHVPIQLKCQKYTDENETYDDLKHPQFLWENFICAVGNGNLLQPSSTRYQTNFSSMITDVMANHSHLFSDKEKSFLDSFQLLPDDGQRLFVRIYTRKGPWFRMSSISYREISDLGQAAMELKLAGYIDMISCMDDLSNYDLKEVIDVLSVPEMKEILKELQKNNVSCTRRHELLSTLLYLYRNGTCTILPKRILKWTGTCIRTSDVADELLWRVQRLFFLNGDQDLSFFLLVDLGLVRFPVYACTISHRVFQEISDLLQYEEAIQVAQVMDQSLDNSNMEMVTRCIELSENRLSTAPKEENATRAEPPPSFFSRFSASSVYSKILTLGVSVYERDRRYTDAIRVLKRLLSTVASDRKRGYWALRLSVDLEHMNRSNESLSIAEAGVIDPWVRAGSKIALQRRVVRLSKPPRRWKVPSYANAVTTNIKEVNIEGRPLNCETGAKNVFYGYDGELCGVEQLALQYYADEGGGWRGTHSEGGIWMTIFGLLMWDAIFSDVPDVFQTKFQTAPLDLETDEFYRSRKDLIESQLKKIQDGIAEEILISSWELHQGTSCRGVNWDRHSLTDLRAAVVCTGGHRLASLLRHLALDYRSWSSGMPDLLLWRFLDERGGGEAKLVEVKGPRDQLSEQQRAWILVLMDFGFDVEVCKVSPVSKRR</sequence>
<protein>
    <recommendedName>
        <fullName evidence="5">Fanconi-associated nuclease 1 homolog</fullName>
        <ecNumber evidence="2">3.1.4.1</ecNumber>
    </recommendedName>
</protein>
<proteinExistence type="inferred from homology"/>
<evidence type="ECO:0000250" key="1">
    <source>
        <dbReference type="UniProtKB" id="Q9I2N0"/>
    </source>
</evidence>
<evidence type="ECO:0000250" key="2">
    <source>
        <dbReference type="UniProtKB" id="Q9Y2M0"/>
    </source>
</evidence>
<evidence type="ECO:0000255" key="3">
    <source>
        <dbReference type="PROSITE-ProRule" id="PRU01256"/>
    </source>
</evidence>
<evidence type="ECO:0000256" key="4">
    <source>
        <dbReference type="SAM" id="MobiDB-lite"/>
    </source>
</evidence>
<evidence type="ECO:0000305" key="5"/>
<name>FAN1_ORYSJ</name>
<reference key="1">
    <citation type="journal article" date="2005" name="Nature">
        <title>The map-based sequence of the rice genome.</title>
        <authorList>
            <consortium name="International rice genome sequencing project (IRGSP)"/>
        </authorList>
    </citation>
    <scope>NUCLEOTIDE SEQUENCE [LARGE SCALE GENOMIC DNA]</scope>
    <source>
        <strain>cv. Nipponbare</strain>
    </source>
</reference>
<reference key="2">
    <citation type="journal article" date="2008" name="Nucleic Acids Res.">
        <title>The rice annotation project database (RAP-DB): 2008 update.</title>
        <authorList>
            <consortium name="The rice annotation project (RAP)"/>
        </authorList>
    </citation>
    <scope>GENOME REANNOTATION</scope>
    <source>
        <strain>cv. Nipponbare</strain>
    </source>
</reference>
<reference key="3">
    <citation type="journal article" date="2013" name="Rice">
        <title>Improvement of the Oryza sativa Nipponbare reference genome using next generation sequence and optical map data.</title>
        <authorList>
            <person name="Kawahara Y."/>
            <person name="de la Bastide M."/>
            <person name="Hamilton J.P."/>
            <person name="Kanamori H."/>
            <person name="McCombie W.R."/>
            <person name="Ouyang S."/>
            <person name="Schwartz D.C."/>
            <person name="Tanaka T."/>
            <person name="Wu J."/>
            <person name="Zhou S."/>
            <person name="Childs K.L."/>
            <person name="Davidson R.M."/>
            <person name="Lin H."/>
            <person name="Quesada-Ocampo L."/>
            <person name="Vaillancourt B."/>
            <person name="Sakai H."/>
            <person name="Lee S.S."/>
            <person name="Kim J."/>
            <person name="Numa H."/>
            <person name="Itoh T."/>
            <person name="Buell C.R."/>
            <person name="Matsumoto T."/>
        </authorList>
    </citation>
    <scope>GENOME REANNOTATION</scope>
    <source>
        <strain>cv. Nipponbare</strain>
    </source>
</reference>
<reference key="4">
    <citation type="journal article" date="2005" name="PLoS Biol.">
        <title>The genomes of Oryza sativa: a history of duplications.</title>
        <authorList>
            <person name="Yu J."/>
            <person name="Wang J."/>
            <person name="Lin W."/>
            <person name="Li S."/>
            <person name="Li H."/>
            <person name="Zhou J."/>
            <person name="Ni P."/>
            <person name="Dong W."/>
            <person name="Hu S."/>
            <person name="Zeng C."/>
            <person name="Zhang J."/>
            <person name="Zhang Y."/>
            <person name="Li R."/>
            <person name="Xu Z."/>
            <person name="Li S."/>
            <person name="Li X."/>
            <person name="Zheng H."/>
            <person name="Cong L."/>
            <person name="Lin L."/>
            <person name="Yin J."/>
            <person name="Geng J."/>
            <person name="Li G."/>
            <person name="Shi J."/>
            <person name="Liu J."/>
            <person name="Lv H."/>
            <person name="Li J."/>
            <person name="Wang J."/>
            <person name="Deng Y."/>
            <person name="Ran L."/>
            <person name="Shi X."/>
            <person name="Wang X."/>
            <person name="Wu Q."/>
            <person name="Li C."/>
            <person name="Ren X."/>
            <person name="Wang J."/>
            <person name="Wang X."/>
            <person name="Li D."/>
            <person name="Liu D."/>
            <person name="Zhang X."/>
            <person name="Ji Z."/>
            <person name="Zhao W."/>
            <person name="Sun Y."/>
            <person name="Zhang Z."/>
            <person name="Bao J."/>
            <person name="Han Y."/>
            <person name="Dong L."/>
            <person name="Ji J."/>
            <person name="Chen P."/>
            <person name="Wu S."/>
            <person name="Liu J."/>
            <person name="Xiao Y."/>
            <person name="Bu D."/>
            <person name="Tan J."/>
            <person name="Yang L."/>
            <person name="Ye C."/>
            <person name="Zhang J."/>
            <person name="Xu J."/>
            <person name="Zhou Y."/>
            <person name="Yu Y."/>
            <person name="Zhang B."/>
            <person name="Zhuang S."/>
            <person name="Wei H."/>
            <person name="Liu B."/>
            <person name="Lei M."/>
            <person name="Yu H."/>
            <person name="Li Y."/>
            <person name="Xu H."/>
            <person name="Wei S."/>
            <person name="He X."/>
            <person name="Fang L."/>
            <person name="Zhang Z."/>
            <person name="Zhang Y."/>
            <person name="Huang X."/>
            <person name="Su Z."/>
            <person name="Tong W."/>
            <person name="Li J."/>
            <person name="Tong Z."/>
            <person name="Li S."/>
            <person name="Ye J."/>
            <person name="Wang L."/>
            <person name="Fang L."/>
            <person name="Lei T."/>
            <person name="Chen C.-S."/>
            <person name="Chen H.-C."/>
            <person name="Xu Z."/>
            <person name="Li H."/>
            <person name="Huang H."/>
            <person name="Zhang F."/>
            <person name="Xu H."/>
            <person name="Li N."/>
            <person name="Zhao C."/>
            <person name="Li S."/>
            <person name="Dong L."/>
            <person name="Huang Y."/>
            <person name="Li L."/>
            <person name="Xi Y."/>
            <person name="Qi Q."/>
            <person name="Li W."/>
            <person name="Zhang B."/>
            <person name="Hu W."/>
            <person name="Zhang Y."/>
            <person name="Tian X."/>
            <person name="Jiao Y."/>
            <person name="Liang X."/>
            <person name="Jin J."/>
            <person name="Gao L."/>
            <person name="Zheng W."/>
            <person name="Hao B."/>
            <person name="Liu S.-M."/>
            <person name="Wang W."/>
            <person name="Yuan L."/>
            <person name="Cao M."/>
            <person name="McDermott J."/>
            <person name="Samudrala R."/>
            <person name="Wang J."/>
            <person name="Wong G.K.-S."/>
            <person name="Yang H."/>
        </authorList>
    </citation>
    <scope>NUCLEOTIDE SEQUENCE [LARGE SCALE GENOMIC DNA]</scope>
    <source>
        <strain>cv. Nipponbare</strain>
    </source>
</reference>
<organism>
    <name type="scientific">Oryza sativa subsp. japonica</name>
    <name type="common">Rice</name>
    <dbReference type="NCBI Taxonomy" id="39947"/>
    <lineage>
        <taxon>Eukaryota</taxon>
        <taxon>Viridiplantae</taxon>
        <taxon>Streptophyta</taxon>
        <taxon>Embryophyta</taxon>
        <taxon>Tracheophyta</taxon>
        <taxon>Spermatophyta</taxon>
        <taxon>Magnoliopsida</taxon>
        <taxon>Liliopsida</taxon>
        <taxon>Poales</taxon>
        <taxon>Poaceae</taxon>
        <taxon>BOP clade</taxon>
        <taxon>Oryzoideae</taxon>
        <taxon>Oryzeae</taxon>
        <taxon>Oryzinae</taxon>
        <taxon>Oryza</taxon>
        <taxon>Oryza sativa</taxon>
    </lineage>
</organism>
<feature type="chain" id="PRO_0000398624" description="Fanconi-associated nuclease 1 homolog">
    <location>
        <begin position="1"/>
        <end position="964"/>
    </location>
</feature>
<feature type="domain" description="VRR-NUC">
    <location>
        <begin position="844"/>
        <end position="958"/>
    </location>
</feature>
<feature type="zinc finger region" description="UBZ4-type" evidence="3">
    <location>
        <begin position="63"/>
        <end position="92"/>
    </location>
</feature>
<feature type="region of interest" description="Disordered" evidence="4">
    <location>
        <begin position="31"/>
        <end position="56"/>
    </location>
</feature>
<feature type="binding site" evidence="3">
    <location>
        <position position="66"/>
    </location>
    <ligand>
        <name>Zn(2+)</name>
        <dbReference type="ChEBI" id="CHEBI:29105"/>
    </ligand>
</feature>
<feature type="binding site" evidence="3">
    <location>
        <position position="69"/>
    </location>
    <ligand>
        <name>Zn(2+)</name>
        <dbReference type="ChEBI" id="CHEBI:29105"/>
    </ligand>
</feature>
<feature type="binding site" evidence="3">
    <location>
        <position position="83"/>
    </location>
    <ligand>
        <name>Zn(2+)</name>
        <dbReference type="ChEBI" id="CHEBI:29105"/>
    </ligand>
</feature>
<feature type="binding site" evidence="3">
    <location>
        <position position="87"/>
    </location>
    <ligand>
        <name>Zn(2+)</name>
        <dbReference type="ChEBI" id="CHEBI:29105"/>
    </ligand>
</feature>
<feature type="binding site" evidence="1">
    <location>
        <position position="786"/>
    </location>
    <ligand>
        <name>Mn(2+)</name>
        <dbReference type="ChEBI" id="CHEBI:29035"/>
        <label>2</label>
    </ligand>
</feature>
<feature type="binding site" evidence="1">
    <location>
        <position position="907"/>
    </location>
    <ligand>
        <name>Mn(2+)</name>
        <dbReference type="ChEBI" id="CHEBI:29035"/>
        <label>1</label>
    </ligand>
</feature>
<feature type="binding site" evidence="1">
    <location>
        <position position="907"/>
    </location>
    <ligand>
        <name>Mn(2+)</name>
        <dbReference type="ChEBI" id="CHEBI:29035"/>
        <label>2</label>
    </ligand>
</feature>
<feature type="binding site" evidence="1">
    <location>
        <position position="926"/>
    </location>
    <ligand>
        <name>Mn(2+)</name>
        <dbReference type="ChEBI" id="CHEBI:29035"/>
        <label>1</label>
    </ligand>
</feature>
<feature type="binding site" evidence="1">
    <location>
        <position position="927"/>
    </location>
    <ligand>
        <name>Mn(2+)</name>
        <dbReference type="ChEBI" id="CHEBI:29035"/>
        <label>1</label>
    </ligand>
</feature>
<feature type="splice variant" id="VSP_039787" description="In isoform 2." evidence="5">
    <location>
        <begin position="1"/>
        <end position="386"/>
    </location>
</feature>
<feature type="splice variant" id="VSP_039788" description="In isoform 2." evidence="5">
    <original>SFQLLPDDGQRLFVRIYTRKG</original>
    <variation>MMDKGSLLGSTLEKVAISASR</variation>
    <location>
        <begin position="387"/>
        <end position="407"/>
    </location>
</feature>
<accession>Q5SNL7</accession>
<accession>A0A0N7KLL9</accession>
<accession>B9FRR6</accession>
<gene>
    <name type="ordered locus">Os06g0171800</name>
    <name type="ordered locus">LOC_Os06g07490</name>
    <name type="ORF">OsJ_20287</name>
    <name type="ORF">P0675A05.29</name>
</gene>